<evidence type="ECO:0000255" key="1">
    <source>
        <dbReference type="HAMAP-Rule" id="MF_00154"/>
    </source>
</evidence>
<name>COXX_DESAP</name>
<accession>B1I6G5</accession>
<reference key="1">
    <citation type="submission" date="2007-10" db="EMBL/GenBank/DDBJ databases">
        <title>Complete sequence of chromosome of Desulforudis audaxviator MP104C.</title>
        <authorList>
            <person name="Copeland A."/>
            <person name="Lucas S."/>
            <person name="Lapidus A."/>
            <person name="Barry K."/>
            <person name="Glavina del Rio T."/>
            <person name="Dalin E."/>
            <person name="Tice H."/>
            <person name="Bruce D."/>
            <person name="Pitluck S."/>
            <person name="Lowry S.R."/>
            <person name="Larimer F."/>
            <person name="Land M.L."/>
            <person name="Hauser L."/>
            <person name="Kyrpides N."/>
            <person name="Ivanova N.N."/>
            <person name="Richardson P."/>
        </authorList>
    </citation>
    <scope>NUCLEOTIDE SEQUENCE [LARGE SCALE GENOMIC DNA]</scope>
    <source>
        <strain>MP104C</strain>
    </source>
</reference>
<protein>
    <recommendedName>
        <fullName evidence="1">Protoheme IX farnesyltransferase</fullName>
        <ecNumber evidence="1">2.5.1.141</ecNumber>
    </recommendedName>
    <alternativeName>
        <fullName evidence="1">Heme B farnesyltransferase</fullName>
    </alternativeName>
    <alternativeName>
        <fullName evidence="1">Heme O synthase</fullName>
    </alternativeName>
</protein>
<feature type="chain" id="PRO_0000346039" description="Protoheme IX farnesyltransferase">
    <location>
        <begin position="1"/>
        <end position="317"/>
    </location>
</feature>
<feature type="transmembrane region" description="Helical" evidence="1">
    <location>
        <begin position="43"/>
        <end position="63"/>
    </location>
</feature>
<feature type="transmembrane region" description="Helical" evidence="1">
    <location>
        <begin position="65"/>
        <end position="85"/>
    </location>
</feature>
<feature type="transmembrane region" description="Helical" evidence="1">
    <location>
        <begin position="119"/>
        <end position="139"/>
    </location>
</feature>
<feature type="transmembrane region" description="Helical" evidence="1">
    <location>
        <begin position="140"/>
        <end position="160"/>
    </location>
</feature>
<feature type="transmembrane region" description="Helical" evidence="1">
    <location>
        <begin position="168"/>
        <end position="188"/>
    </location>
</feature>
<feature type="transmembrane region" description="Helical" evidence="1">
    <location>
        <begin position="195"/>
        <end position="215"/>
    </location>
</feature>
<feature type="transmembrane region" description="Helical" evidence="1">
    <location>
        <begin position="238"/>
        <end position="258"/>
    </location>
</feature>
<feature type="transmembrane region" description="Helical" evidence="1">
    <location>
        <begin position="261"/>
        <end position="281"/>
    </location>
</feature>
<feature type="transmembrane region" description="Helical" evidence="1">
    <location>
        <begin position="292"/>
        <end position="312"/>
    </location>
</feature>
<organism>
    <name type="scientific">Desulforudis audaxviator (strain MP104C)</name>
    <dbReference type="NCBI Taxonomy" id="477974"/>
    <lineage>
        <taxon>Bacteria</taxon>
        <taxon>Bacillati</taxon>
        <taxon>Bacillota</taxon>
        <taxon>Clostridia</taxon>
        <taxon>Thermoanaerobacterales</taxon>
        <taxon>Candidatus Desulforudaceae</taxon>
        <taxon>Candidatus Desulforudis</taxon>
    </lineage>
</organism>
<proteinExistence type="inferred from homology"/>
<dbReference type="EC" id="2.5.1.141" evidence="1"/>
<dbReference type="EMBL" id="CP000860">
    <property type="protein sequence ID" value="ACA60591.1"/>
    <property type="molecule type" value="Genomic_DNA"/>
</dbReference>
<dbReference type="RefSeq" id="WP_012303166.1">
    <property type="nucleotide sequence ID" value="NC_010424.1"/>
</dbReference>
<dbReference type="SMR" id="B1I6G5"/>
<dbReference type="STRING" id="477974.Daud_2102"/>
<dbReference type="KEGG" id="dau:Daud_2102"/>
<dbReference type="eggNOG" id="COG0109">
    <property type="taxonomic scope" value="Bacteria"/>
</dbReference>
<dbReference type="HOGENOM" id="CLU_029631_0_2_9"/>
<dbReference type="OrthoDB" id="9814417at2"/>
<dbReference type="UniPathway" id="UPA00834">
    <property type="reaction ID" value="UER00712"/>
</dbReference>
<dbReference type="Proteomes" id="UP000008544">
    <property type="component" value="Chromosome"/>
</dbReference>
<dbReference type="GO" id="GO:0005886">
    <property type="term" value="C:plasma membrane"/>
    <property type="evidence" value="ECO:0007669"/>
    <property type="project" value="UniProtKB-SubCell"/>
</dbReference>
<dbReference type="GO" id="GO:0008495">
    <property type="term" value="F:protoheme IX farnesyltransferase activity"/>
    <property type="evidence" value="ECO:0007669"/>
    <property type="project" value="UniProtKB-UniRule"/>
</dbReference>
<dbReference type="GO" id="GO:0048034">
    <property type="term" value="P:heme O biosynthetic process"/>
    <property type="evidence" value="ECO:0007669"/>
    <property type="project" value="UniProtKB-UniRule"/>
</dbReference>
<dbReference type="CDD" id="cd13957">
    <property type="entry name" value="PT_UbiA_Cox10"/>
    <property type="match status" value="1"/>
</dbReference>
<dbReference type="Gene3D" id="1.10.357.140">
    <property type="entry name" value="UbiA prenyltransferase"/>
    <property type="match status" value="1"/>
</dbReference>
<dbReference type="HAMAP" id="MF_00154">
    <property type="entry name" value="CyoE_CtaB"/>
    <property type="match status" value="1"/>
</dbReference>
<dbReference type="InterPro" id="IPR006369">
    <property type="entry name" value="Protohaem_IX_farnesylTrfase"/>
</dbReference>
<dbReference type="InterPro" id="IPR000537">
    <property type="entry name" value="UbiA_prenyltransferase"/>
</dbReference>
<dbReference type="InterPro" id="IPR044878">
    <property type="entry name" value="UbiA_sf"/>
</dbReference>
<dbReference type="NCBIfam" id="TIGR01473">
    <property type="entry name" value="cyoE_ctaB"/>
    <property type="match status" value="1"/>
</dbReference>
<dbReference type="NCBIfam" id="NF003349">
    <property type="entry name" value="PRK04375.1-2"/>
    <property type="match status" value="1"/>
</dbReference>
<dbReference type="PANTHER" id="PTHR43448">
    <property type="entry name" value="PROTOHEME IX FARNESYLTRANSFERASE, MITOCHONDRIAL"/>
    <property type="match status" value="1"/>
</dbReference>
<dbReference type="PANTHER" id="PTHR43448:SF2">
    <property type="entry name" value="PROTOHEME IX FARNESYLTRANSFERASE, MITOCHONDRIAL"/>
    <property type="match status" value="1"/>
</dbReference>
<dbReference type="Pfam" id="PF01040">
    <property type="entry name" value="UbiA"/>
    <property type="match status" value="1"/>
</dbReference>
<keyword id="KW-1003">Cell membrane</keyword>
<keyword id="KW-0350">Heme biosynthesis</keyword>
<keyword id="KW-0472">Membrane</keyword>
<keyword id="KW-1185">Reference proteome</keyword>
<keyword id="KW-0808">Transferase</keyword>
<keyword id="KW-0812">Transmembrane</keyword>
<keyword id="KW-1133">Transmembrane helix</keyword>
<sequence>MGDRLTGLHAPTTEAGAASADHTAVVRPGFRDTAKAYVEVTKPISVGLLAFTAAAMMVVAGATHPVSGWLFVQALLAVVLACAGANAVSCYVDRDMDAQMGRTRRRPVPSGRISPPARALYWGLFLFVASLGLAWNLNPIAWITLWGGMLGYVVVYSLWLKRRSVWNIVIGGVSGGMPALFGWAAVTGEISLLPVLIAALVVLWIPNHIWSLAIFYREEYARVKVPMLPVVYELRRALNWLLLTVVLMVVFSVLIYFVGDWGLVYLATALVMGAAALALSVHIYRNPERRKAWVLFKFSSPYLAVLFLSMMVDVWLR</sequence>
<comment type="function">
    <text evidence="1">Converts heme B (protoheme IX) to heme O by substitution of the vinyl group on carbon 2 of heme B porphyrin ring with a hydroxyethyl farnesyl side group.</text>
</comment>
<comment type="catalytic activity">
    <reaction evidence="1">
        <text>heme b + (2E,6E)-farnesyl diphosphate + H2O = Fe(II)-heme o + diphosphate</text>
        <dbReference type="Rhea" id="RHEA:28070"/>
        <dbReference type="ChEBI" id="CHEBI:15377"/>
        <dbReference type="ChEBI" id="CHEBI:33019"/>
        <dbReference type="ChEBI" id="CHEBI:60344"/>
        <dbReference type="ChEBI" id="CHEBI:60530"/>
        <dbReference type="ChEBI" id="CHEBI:175763"/>
        <dbReference type="EC" id="2.5.1.141"/>
    </reaction>
</comment>
<comment type="pathway">
    <text evidence="1">Porphyrin-containing compound metabolism; heme O biosynthesis; heme O from protoheme: step 1/1.</text>
</comment>
<comment type="subunit">
    <text evidence="1">Interacts with CtaA.</text>
</comment>
<comment type="subcellular location">
    <subcellularLocation>
        <location evidence="1">Cell membrane</location>
        <topology evidence="1">Multi-pass membrane protein</topology>
    </subcellularLocation>
</comment>
<comment type="miscellaneous">
    <text evidence="1">Carbon 2 of the heme B porphyrin ring is defined according to the Fischer nomenclature.</text>
</comment>
<comment type="similarity">
    <text evidence="1">Belongs to the UbiA prenyltransferase family. Protoheme IX farnesyltransferase subfamily.</text>
</comment>
<gene>
    <name evidence="1" type="primary">ctaB</name>
    <name type="ordered locus">Daud_2102</name>
</gene>